<gene>
    <name evidence="1" type="primary">rbfA</name>
    <name type="ordered locus">ckrop_1141</name>
</gene>
<evidence type="ECO:0000255" key="1">
    <source>
        <dbReference type="HAMAP-Rule" id="MF_00003"/>
    </source>
</evidence>
<evidence type="ECO:0000256" key="2">
    <source>
        <dbReference type="SAM" id="MobiDB-lite"/>
    </source>
</evidence>
<keyword id="KW-0963">Cytoplasm</keyword>
<keyword id="KW-1185">Reference proteome</keyword>
<keyword id="KW-0690">Ribosome biogenesis</keyword>
<dbReference type="EMBL" id="CP001620">
    <property type="protein sequence ID" value="ACR17886.1"/>
    <property type="molecule type" value="Genomic_DNA"/>
</dbReference>
<dbReference type="RefSeq" id="WP_012731773.1">
    <property type="nucleotide sequence ID" value="NC_012704.1"/>
</dbReference>
<dbReference type="SMR" id="C4LJ81"/>
<dbReference type="STRING" id="645127.ckrop_1141"/>
<dbReference type="KEGG" id="ckp:ckrop_1141"/>
<dbReference type="eggNOG" id="COG0858">
    <property type="taxonomic scope" value="Bacteria"/>
</dbReference>
<dbReference type="HOGENOM" id="CLU_089475_0_0_11"/>
<dbReference type="OrthoDB" id="307788at2"/>
<dbReference type="Proteomes" id="UP000001473">
    <property type="component" value="Chromosome"/>
</dbReference>
<dbReference type="GO" id="GO:0005829">
    <property type="term" value="C:cytosol"/>
    <property type="evidence" value="ECO:0007669"/>
    <property type="project" value="TreeGrafter"/>
</dbReference>
<dbReference type="GO" id="GO:0043024">
    <property type="term" value="F:ribosomal small subunit binding"/>
    <property type="evidence" value="ECO:0007669"/>
    <property type="project" value="TreeGrafter"/>
</dbReference>
<dbReference type="GO" id="GO:0030490">
    <property type="term" value="P:maturation of SSU-rRNA"/>
    <property type="evidence" value="ECO:0007669"/>
    <property type="project" value="UniProtKB-UniRule"/>
</dbReference>
<dbReference type="Gene3D" id="3.30.300.20">
    <property type="match status" value="1"/>
</dbReference>
<dbReference type="HAMAP" id="MF_00003">
    <property type="entry name" value="RbfA"/>
    <property type="match status" value="1"/>
</dbReference>
<dbReference type="InterPro" id="IPR015946">
    <property type="entry name" value="KH_dom-like_a/b"/>
</dbReference>
<dbReference type="InterPro" id="IPR000238">
    <property type="entry name" value="RbfA"/>
</dbReference>
<dbReference type="InterPro" id="IPR023799">
    <property type="entry name" value="RbfA_dom_sf"/>
</dbReference>
<dbReference type="InterPro" id="IPR020053">
    <property type="entry name" value="Ribosome-bd_factorA_CS"/>
</dbReference>
<dbReference type="NCBIfam" id="TIGR00082">
    <property type="entry name" value="rbfA"/>
    <property type="match status" value="1"/>
</dbReference>
<dbReference type="PANTHER" id="PTHR33515">
    <property type="entry name" value="RIBOSOME-BINDING FACTOR A, CHLOROPLASTIC-RELATED"/>
    <property type="match status" value="1"/>
</dbReference>
<dbReference type="PANTHER" id="PTHR33515:SF1">
    <property type="entry name" value="RIBOSOME-BINDING FACTOR A, CHLOROPLASTIC-RELATED"/>
    <property type="match status" value="1"/>
</dbReference>
<dbReference type="Pfam" id="PF02033">
    <property type="entry name" value="RBFA"/>
    <property type="match status" value="1"/>
</dbReference>
<dbReference type="SUPFAM" id="SSF89919">
    <property type="entry name" value="Ribosome-binding factor A, RbfA"/>
    <property type="match status" value="1"/>
</dbReference>
<dbReference type="PROSITE" id="PS01319">
    <property type="entry name" value="RBFA"/>
    <property type="match status" value="1"/>
</dbReference>
<protein>
    <recommendedName>
        <fullName evidence="1">Ribosome-binding factor A</fullName>
    </recommendedName>
</protein>
<name>RBFA_CORK4</name>
<comment type="function">
    <text evidence="1">One of several proteins that assist in the late maturation steps of the functional core of the 30S ribosomal subunit. Associates with free 30S ribosomal subunits (but not with 30S subunits that are part of 70S ribosomes or polysomes). Required for efficient processing of 16S rRNA. May interact with the 5'-terminal helix region of 16S rRNA.</text>
</comment>
<comment type="subunit">
    <text evidence="1">Monomer. Binds 30S ribosomal subunits, but not 50S ribosomal subunits or 70S ribosomes.</text>
</comment>
<comment type="subcellular location">
    <subcellularLocation>
        <location evidence="1">Cytoplasm</location>
    </subcellularLocation>
</comment>
<comment type="similarity">
    <text evidence="1">Belongs to the RbfA family.</text>
</comment>
<organism>
    <name type="scientific">Corynebacterium kroppenstedtii (strain DSM 44385 / JCM 11950 / CIP 105744 / CCUG 35717)</name>
    <dbReference type="NCBI Taxonomy" id="645127"/>
    <lineage>
        <taxon>Bacteria</taxon>
        <taxon>Bacillati</taxon>
        <taxon>Actinomycetota</taxon>
        <taxon>Actinomycetes</taxon>
        <taxon>Mycobacteriales</taxon>
        <taxon>Corynebacteriaceae</taxon>
        <taxon>Corynebacterium</taxon>
    </lineage>
</organism>
<feature type="chain" id="PRO_1000201626" description="Ribosome-binding factor A">
    <location>
        <begin position="1"/>
        <end position="155"/>
    </location>
</feature>
<feature type="region of interest" description="Disordered" evidence="2">
    <location>
        <begin position="116"/>
        <end position="155"/>
    </location>
</feature>
<feature type="compositionally biased region" description="Basic and acidic residues" evidence="2">
    <location>
        <begin position="116"/>
        <end position="125"/>
    </location>
</feature>
<feature type="compositionally biased region" description="Basic and acidic residues" evidence="2">
    <location>
        <begin position="142"/>
        <end position="155"/>
    </location>
</feature>
<accession>C4LJ81</accession>
<proteinExistence type="inferred from homology"/>
<sequence>MADRARAARMAKRIQTIVANTIEHSVKDRRLELVTITDTQLTGDLHDATVFYTVRGRTLDEEPDREQAAEALHRARGQLRKAVGDQLGVRFTPTLTFTLDTVPETSARLEELLAQARQRDQEVARQAEGATPAGDANPYKTSPHEGRPESEADGW</sequence>
<reference key="1">
    <citation type="journal article" date="2008" name="J. Biotechnol.">
        <title>Ultrafast pyrosequencing of Corynebacterium kroppenstedtii DSM44385 revealed insights into the physiology of a lipophilic corynebacterium that lacks mycolic acids.</title>
        <authorList>
            <person name="Tauch A."/>
            <person name="Schneider J."/>
            <person name="Szczepanowski R."/>
            <person name="Tilker A."/>
            <person name="Viehoever P."/>
            <person name="Gartemann K.-H."/>
            <person name="Arnold W."/>
            <person name="Blom J."/>
            <person name="Brinkrolf K."/>
            <person name="Brune I."/>
            <person name="Goetker S."/>
            <person name="Weisshaar B."/>
            <person name="Goesmann A."/>
            <person name="Droege M."/>
            <person name="Puehler A."/>
        </authorList>
    </citation>
    <scope>NUCLEOTIDE SEQUENCE [LARGE SCALE GENOMIC DNA]</scope>
    <source>
        <strain>DSM 44385 / JCM 11950 / CIP 105744 / CCUG 35717</strain>
    </source>
</reference>